<name>RS14Z_CLOD6</name>
<dbReference type="EMBL" id="AM180355">
    <property type="protein sequence ID" value="CAJ66901.1"/>
    <property type="molecule type" value="Genomic_DNA"/>
</dbReference>
<dbReference type="RefSeq" id="WP_003421149.1">
    <property type="nucleotide sequence ID" value="NZ_JAUPES010000043.1"/>
</dbReference>
<dbReference type="RefSeq" id="YP_001086550.1">
    <property type="nucleotide sequence ID" value="NC_009089.1"/>
</dbReference>
<dbReference type="SMR" id="Q18CH1"/>
<dbReference type="STRING" id="272563.CD630_00841"/>
<dbReference type="EnsemblBacteria" id="CAJ66901">
    <property type="protein sequence ID" value="CAJ66901"/>
    <property type="gene ID" value="CD630_00841"/>
</dbReference>
<dbReference type="KEGG" id="cdf:CD630_00841"/>
<dbReference type="KEGG" id="pdc:CDIF630_00152"/>
<dbReference type="PATRIC" id="fig|272563.120.peg.92"/>
<dbReference type="eggNOG" id="COG0199">
    <property type="taxonomic scope" value="Bacteria"/>
</dbReference>
<dbReference type="OrthoDB" id="9810484at2"/>
<dbReference type="PhylomeDB" id="Q18CH1"/>
<dbReference type="BioCyc" id="PDIF272563:G12WB-140-MONOMER"/>
<dbReference type="Proteomes" id="UP000001978">
    <property type="component" value="Chromosome"/>
</dbReference>
<dbReference type="GO" id="GO:0005737">
    <property type="term" value="C:cytoplasm"/>
    <property type="evidence" value="ECO:0007669"/>
    <property type="project" value="UniProtKB-ARBA"/>
</dbReference>
<dbReference type="GO" id="GO:0015935">
    <property type="term" value="C:small ribosomal subunit"/>
    <property type="evidence" value="ECO:0007669"/>
    <property type="project" value="TreeGrafter"/>
</dbReference>
<dbReference type="GO" id="GO:0019843">
    <property type="term" value="F:rRNA binding"/>
    <property type="evidence" value="ECO:0007669"/>
    <property type="project" value="UniProtKB-UniRule"/>
</dbReference>
<dbReference type="GO" id="GO:0003735">
    <property type="term" value="F:structural constituent of ribosome"/>
    <property type="evidence" value="ECO:0007669"/>
    <property type="project" value="InterPro"/>
</dbReference>
<dbReference type="GO" id="GO:0008270">
    <property type="term" value="F:zinc ion binding"/>
    <property type="evidence" value="ECO:0007669"/>
    <property type="project" value="UniProtKB-UniRule"/>
</dbReference>
<dbReference type="GO" id="GO:0006412">
    <property type="term" value="P:translation"/>
    <property type="evidence" value="ECO:0007669"/>
    <property type="project" value="UniProtKB-UniRule"/>
</dbReference>
<dbReference type="FunFam" id="4.10.830.10:FF:000001">
    <property type="entry name" value="30S ribosomal protein S14 type Z"/>
    <property type="match status" value="1"/>
</dbReference>
<dbReference type="Gene3D" id="4.10.830.10">
    <property type="entry name" value="30s Ribosomal Protein S14, Chain N"/>
    <property type="match status" value="1"/>
</dbReference>
<dbReference type="HAMAP" id="MF_01364_B">
    <property type="entry name" value="Ribosomal_uS14_2_B"/>
    <property type="match status" value="1"/>
</dbReference>
<dbReference type="InterPro" id="IPR001209">
    <property type="entry name" value="Ribosomal_uS14"/>
</dbReference>
<dbReference type="InterPro" id="IPR023053">
    <property type="entry name" value="Ribosomal_uS14_bact"/>
</dbReference>
<dbReference type="InterPro" id="IPR018271">
    <property type="entry name" value="Ribosomal_uS14_CS"/>
</dbReference>
<dbReference type="InterPro" id="IPR043140">
    <property type="entry name" value="Ribosomal_uS14_sf"/>
</dbReference>
<dbReference type="NCBIfam" id="NF005974">
    <property type="entry name" value="PRK08061.1"/>
    <property type="match status" value="1"/>
</dbReference>
<dbReference type="PANTHER" id="PTHR19836">
    <property type="entry name" value="30S RIBOSOMAL PROTEIN S14"/>
    <property type="match status" value="1"/>
</dbReference>
<dbReference type="PANTHER" id="PTHR19836:SF19">
    <property type="entry name" value="SMALL RIBOSOMAL SUBUNIT PROTEIN US14M"/>
    <property type="match status" value="1"/>
</dbReference>
<dbReference type="Pfam" id="PF00253">
    <property type="entry name" value="Ribosomal_S14"/>
    <property type="match status" value="1"/>
</dbReference>
<dbReference type="SUPFAM" id="SSF57716">
    <property type="entry name" value="Glucocorticoid receptor-like (DNA-binding domain)"/>
    <property type="match status" value="1"/>
</dbReference>
<dbReference type="PROSITE" id="PS00527">
    <property type="entry name" value="RIBOSOMAL_S14"/>
    <property type="match status" value="1"/>
</dbReference>
<evidence type="ECO:0000255" key="1">
    <source>
        <dbReference type="HAMAP-Rule" id="MF_01364"/>
    </source>
</evidence>
<evidence type="ECO:0000305" key="2"/>
<comment type="function">
    <text evidence="1">Binds 16S rRNA, required for the assembly of 30S particles and may also be responsible for determining the conformation of the 16S rRNA at the A site.</text>
</comment>
<comment type="cofactor">
    <cofactor evidence="1">
        <name>Zn(2+)</name>
        <dbReference type="ChEBI" id="CHEBI:29105"/>
    </cofactor>
    <text evidence="1">Binds 1 zinc ion per subunit.</text>
</comment>
<comment type="subunit">
    <text evidence="1">Part of the 30S ribosomal subunit. Contacts proteins S3 and S10.</text>
</comment>
<comment type="similarity">
    <text evidence="1">Belongs to the universal ribosomal protein uS14 family. Zinc-binding uS14 subfamily.</text>
</comment>
<protein>
    <recommendedName>
        <fullName evidence="1">Small ribosomal subunit protein uS14</fullName>
    </recommendedName>
    <alternativeName>
        <fullName evidence="2">30S ribosomal protein S14 type Z</fullName>
    </alternativeName>
</protein>
<sequence length="61" mass="7177">MARKAMVVKQQRKQKYATREYTRCTICGRPHSVLKKFGICRICFRELAYKGQIPGVRKASW</sequence>
<feature type="chain" id="PRO_0000269090" description="Small ribosomal subunit protein uS14">
    <location>
        <begin position="1"/>
        <end position="61"/>
    </location>
</feature>
<feature type="binding site" evidence="1">
    <location>
        <position position="24"/>
    </location>
    <ligand>
        <name>Zn(2+)</name>
        <dbReference type="ChEBI" id="CHEBI:29105"/>
    </ligand>
</feature>
<feature type="binding site" evidence="1">
    <location>
        <position position="27"/>
    </location>
    <ligand>
        <name>Zn(2+)</name>
        <dbReference type="ChEBI" id="CHEBI:29105"/>
    </ligand>
</feature>
<feature type="binding site" evidence="1">
    <location>
        <position position="40"/>
    </location>
    <ligand>
        <name>Zn(2+)</name>
        <dbReference type="ChEBI" id="CHEBI:29105"/>
    </ligand>
</feature>
<feature type="binding site" evidence="1">
    <location>
        <position position="43"/>
    </location>
    <ligand>
        <name>Zn(2+)</name>
        <dbReference type="ChEBI" id="CHEBI:29105"/>
    </ligand>
</feature>
<proteinExistence type="inferred from homology"/>
<accession>Q18CH1</accession>
<keyword id="KW-0479">Metal-binding</keyword>
<keyword id="KW-1185">Reference proteome</keyword>
<keyword id="KW-0687">Ribonucleoprotein</keyword>
<keyword id="KW-0689">Ribosomal protein</keyword>
<keyword id="KW-0694">RNA-binding</keyword>
<keyword id="KW-0699">rRNA-binding</keyword>
<keyword id="KW-0862">Zinc</keyword>
<organism>
    <name type="scientific">Clostridioides difficile (strain 630)</name>
    <name type="common">Peptoclostridium difficile</name>
    <dbReference type="NCBI Taxonomy" id="272563"/>
    <lineage>
        <taxon>Bacteria</taxon>
        <taxon>Bacillati</taxon>
        <taxon>Bacillota</taxon>
        <taxon>Clostridia</taxon>
        <taxon>Peptostreptococcales</taxon>
        <taxon>Peptostreptococcaceae</taxon>
        <taxon>Clostridioides</taxon>
    </lineage>
</organism>
<gene>
    <name evidence="1" type="primary">rpsZ</name>
    <name evidence="1" type="synonym">rpsN</name>
    <name type="ordered locus">CD630_00841</name>
    <name type="ORF">CD0084A</name>
</gene>
<reference key="1">
    <citation type="journal article" date="2006" name="Nat. Genet.">
        <title>The multidrug-resistant human pathogen Clostridium difficile has a highly mobile, mosaic genome.</title>
        <authorList>
            <person name="Sebaihia M."/>
            <person name="Wren B.W."/>
            <person name="Mullany P."/>
            <person name="Fairweather N.F."/>
            <person name="Minton N."/>
            <person name="Stabler R."/>
            <person name="Thomson N.R."/>
            <person name="Roberts A.P."/>
            <person name="Cerdeno-Tarraga A.M."/>
            <person name="Wang H."/>
            <person name="Holden M.T.G."/>
            <person name="Wright A."/>
            <person name="Churcher C."/>
            <person name="Quail M.A."/>
            <person name="Baker S."/>
            <person name="Bason N."/>
            <person name="Brooks K."/>
            <person name="Chillingworth T."/>
            <person name="Cronin A."/>
            <person name="Davis P."/>
            <person name="Dowd L."/>
            <person name="Fraser A."/>
            <person name="Feltwell T."/>
            <person name="Hance Z."/>
            <person name="Holroyd S."/>
            <person name="Jagels K."/>
            <person name="Moule S."/>
            <person name="Mungall K."/>
            <person name="Price C."/>
            <person name="Rabbinowitsch E."/>
            <person name="Sharp S."/>
            <person name="Simmonds M."/>
            <person name="Stevens K."/>
            <person name="Unwin L."/>
            <person name="Whithead S."/>
            <person name="Dupuy B."/>
            <person name="Dougan G."/>
            <person name="Barrell B."/>
            <person name="Parkhill J."/>
        </authorList>
    </citation>
    <scope>NUCLEOTIDE SEQUENCE [LARGE SCALE GENOMIC DNA]</scope>
    <source>
        <strain>630</strain>
    </source>
</reference>